<reference key="1">
    <citation type="journal article" date="2006" name="Genome Res.">
        <title>Massive genome erosion and functional adaptations provide insights into the symbiotic lifestyle of Sodalis glossinidius in the tsetse host.</title>
        <authorList>
            <person name="Toh H."/>
            <person name="Weiss B.L."/>
            <person name="Perkin S.A.H."/>
            <person name="Yamashita A."/>
            <person name="Oshima K."/>
            <person name="Hattori M."/>
            <person name="Aksoy S."/>
        </authorList>
    </citation>
    <scope>NUCLEOTIDE SEQUENCE [LARGE SCALE GENOMIC DNA]</scope>
    <source>
        <strain>morsitans</strain>
    </source>
</reference>
<name>QUEC_SODGM</name>
<sequence length="231" mass="25152">MKRAVVVFSGGQDSTTCLIQALSQYDEVHCVTFDYGQRHRAEIDVARKLAMQLGARAHKVIDAGLLNALAVSSLTRDNITFPGYEDSAGGLPSTFVPGRNILFLTLAAIYAYQVEASAVITGVCETDFSGYPDCRDNFIKALNAAVNLGMARELSFVTPLMWLDKAETWALADYYHQLDRVRHDTLTCYNGIKGDGCGQCAACHLRTHGLAAYRAQPQAVMASLKAKTGLH</sequence>
<keyword id="KW-0067">ATP-binding</keyword>
<keyword id="KW-0436">Ligase</keyword>
<keyword id="KW-0479">Metal-binding</keyword>
<keyword id="KW-0547">Nucleotide-binding</keyword>
<keyword id="KW-0671">Queuosine biosynthesis</keyword>
<keyword id="KW-0862">Zinc</keyword>
<accession>Q2NV74</accession>
<protein>
    <recommendedName>
        <fullName evidence="1">7-cyano-7-deazaguanine synthase</fullName>
        <ecNumber evidence="1">6.3.4.20</ecNumber>
    </recommendedName>
    <alternativeName>
        <fullName evidence="1">7-cyano-7-carbaguanine synthase</fullName>
    </alternativeName>
    <alternativeName>
        <fullName evidence="1">PreQ(0) synthase</fullName>
    </alternativeName>
    <alternativeName>
        <fullName evidence="1">Queuosine biosynthesis protein QueC</fullName>
    </alternativeName>
</protein>
<dbReference type="EC" id="6.3.4.20" evidence="1"/>
<dbReference type="EMBL" id="AP008232">
    <property type="protein sequence ID" value="BAE73951.1"/>
    <property type="molecule type" value="Genomic_DNA"/>
</dbReference>
<dbReference type="RefSeq" id="WP_011410539.1">
    <property type="nucleotide sequence ID" value="NC_007712.1"/>
</dbReference>
<dbReference type="SMR" id="Q2NV74"/>
<dbReference type="STRING" id="343509.SG0676"/>
<dbReference type="KEGG" id="sgl:SG0676"/>
<dbReference type="eggNOG" id="COG0603">
    <property type="taxonomic scope" value="Bacteria"/>
</dbReference>
<dbReference type="HOGENOM" id="CLU_081854_0_0_6"/>
<dbReference type="OrthoDB" id="9789567at2"/>
<dbReference type="UniPathway" id="UPA00391"/>
<dbReference type="Proteomes" id="UP000001932">
    <property type="component" value="Chromosome"/>
</dbReference>
<dbReference type="GO" id="GO:0005524">
    <property type="term" value="F:ATP binding"/>
    <property type="evidence" value="ECO:0007669"/>
    <property type="project" value="UniProtKB-UniRule"/>
</dbReference>
<dbReference type="GO" id="GO:0016879">
    <property type="term" value="F:ligase activity, forming carbon-nitrogen bonds"/>
    <property type="evidence" value="ECO:0007669"/>
    <property type="project" value="UniProtKB-UniRule"/>
</dbReference>
<dbReference type="GO" id="GO:0008270">
    <property type="term" value="F:zinc ion binding"/>
    <property type="evidence" value="ECO:0007669"/>
    <property type="project" value="UniProtKB-UniRule"/>
</dbReference>
<dbReference type="GO" id="GO:0008616">
    <property type="term" value="P:queuosine biosynthetic process"/>
    <property type="evidence" value="ECO:0007669"/>
    <property type="project" value="UniProtKB-UniRule"/>
</dbReference>
<dbReference type="CDD" id="cd01995">
    <property type="entry name" value="QueC-like"/>
    <property type="match status" value="1"/>
</dbReference>
<dbReference type="FunFam" id="3.40.50.620:FF:000017">
    <property type="entry name" value="7-cyano-7-deazaguanine synthase"/>
    <property type="match status" value="1"/>
</dbReference>
<dbReference type="Gene3D" id="3.40.50.620">
    <property type="entry name" value="HUPs"/>
    <property type="match status" value="1"/>
</dbReference>
<dbReference type="HAMAP" id="MF_01633">
    <property type="entry name" value="QueC"/>
    <property type="match status" value="1"/>
</dbReference>
<dbReference type="InterPro" id="IPR018317">
    <property type="entry name" value="QueC"/>
</dbReference>
<dbReference type="InterPro" id="IPR014729">
    <property type="entry name" value="Rossmann-like_a/b/a_fold"/>
</dbReference>
<dbReference type="NCBIfam" id="TIGR00364">
    <property type="entry name" value="7-cyano-7-deazaguanine synthase QueC"/>
    <property type="match status" value="1"/>
</dbReference>
<dbReference type="NCBIfam" id="NF008317">
    <property type="entry name" value="PRK11106.1"/>
    <property type="match status" value="1"/>
</dbReference>
<dbReference type="PANTHER" id="PTHR42914">
    <property type="entry name" value="7-CYANO-7-DEAZAGUANINE SYNTHASE"/>
    <property type="match status" value="1"/>
</dbReference>
<dbReference type="PANTHER" id="PTHR42914:SF1">
    <property type="entry name" value="7-CYANO-7-DEAZAGUANINE SYNTHASE"/>
    <property type="match status" value="1"/>
</dbReference>
<dbReference type="Pfam" id="PF06508">
    <property type="entry name" value="QueC"/>
    <property type="match status" value="1"/>
</dbReference>
<dbReference type="PIRSF" id="PIRSF006293">
    <property type="entry name" value="ExsB"/>
    <property type="match status" value="1"/>
</dbReference>
<dbReference type="SUPFAM" id="SSF52402">
    <property type="entry name" value="Adenine nucleotide alpha hydrolases-like"/>
    <property type="match status" value="1"/>
</dbReference>
<comment type="function">
    <text evidence="1">Catalyzes the ATP-dependent conversion of 7-carboxy-7-deazaguanine (CDG) to 7-cyano-7-deazaguanine (preQ(0)).</text>
</comment>
<comment type="catalytic activity">
    <reaction evidence="1">
        <text>7-carboxy-7-deazaguanine + NH4(+) + ATP = 7-cyano-7-deazaguanine + ADP + phosphate + H2O + H(+)</text>
        <dbReference type="Rhea" id="RHEA:27982"/>
        <dbReference type="ChEBI" id="CHEBI:15377"/>
        <dbReference type="ChEBI" id="CHEBI:15378"/>
        <dbReference type="ChEBI" id="CHEBI:28938"/>
        <dbReference type="ChEBI" id="CHEBI:30616"/>
        <dbReference type="ChEBI" id="CHEBI:43474"/>
        <dbReference type="ChEBI" id="CHEBI:45075"/>
        <dbReference type="ChEBI" id="CHEBI:61036"/>
        <dbReference type="ChEBI" id="CHEBI:456216"/>
        <dbReference type="EC" id="6.3.4.20"/>
    </reaction>
</comment>
<comment type="cofactor">
    <cofactor evidence="1">
        <name>Zn(2+)</name>
        <dbReference type="ChEBI" id="CHEBI:29105"/>
    </cofactor>
    <text evidence="1">Binds 1 zinc ion per subunit.</text>
</comment>
<comment type="pathway">
    <text evidence="1">Purine metabolism; 7-cyano-7-deazaguanine biosynthesis.</text>
</comment>
<comment type="similarity">
    <text evidence="1">Belongs to the QueC family.</text>
</comment>
<organism>
    <name type="scientific">Sodalis glossinidius (strain morsitans)</name>
    <dbReference type="NCBI Taxonomy" id="343509"/>
    <lineage>
        <taxon>Bacteria</taxon>
        <taxon>Pseudomonadati</taxon>
        <taxon>Pseudomonadota</taxon>
        <taxon>Gammaproteobacteria</taxon>
        <taxon>Enterobacterales</taxon>
        <taxon>Bruguierivoracaceae</taxon>
        <taxon>Sodalis</taxon>
    </lineage>
</organism>
<feature type="chain" id="PRO_0000246927" description="7-cyano-7-deazaguanine synthase">
    <location>
        <begin position="1"/>
        <end position="231"/>
    </location>
</feature>
<feature type="binding site" evidence="1">
    <location>
        <begin position="8"/>
        <end position="18"/>
    </location>
    <ligand>
        <name>ATP</name>
        <dbReference type="ChEBI" id="CHEBI:30616"/>
    </ligand>
</feature>
<feature type="binding site" evidence="1">
    <location>
        <position position="188"/>
    </location>
    <ligand>
        <name>Zn(2+)</name>
        <dbReference type="ChEBI" id="CHEBI:29105"/>
    </ligand>
</feature>
<feature type="binding site" evidence="1">
    <location>
        <position position="197"/>
    </location>
    <ligand>
        <name>Zn(2+)</name>
        <dbReference type="ChEBI" id="CHEBI:29105"/>
    </ligand>
</feature>
<feature type="binding site" evidence="1">
    <location>
        <position position="200"/>
    </location>
    <ligand>
        <name>Zn(2+)</name>
        <dbReference type="ChEBI" id="CHEBI:29105"/>
    </ligand>
</feature>
<feature type="binding site" evidence="1">
    <location>
        <position position="203"/>
    </location>
    <ligand>
        <name>Zn(2+)</name>
        <dbReference type="ChEBI" id="CHEBI:29105"/>
    </ligand>
</feature>
<evidence type="ECO:0000255" key="1">
    <source>
        <dbReference type="HAMAP-Rule" id="MF_01633"/>
    </source>
</evidence>
<proteinExistence type="inferred from homology"/>
<gene>
    <name evidence="1" type="primary">queC</name>
    <name type="ordered locus">SG0676</name>
</gene>